<feature type="chain" id="PRO_0000100580" description="Phosphoribosylformylglycinamidine synthase subunit PurQ">
    <location>
        <begin position="1"/>
        <end position="223"/>
    </location>
</feature>
<feature type="domain" description="Glutamine amidotransferase type-1" evidence="1">
    <location>
        <begin position="3"/>
        <end position="223"/>
    </location>
</feature>
<feature type="active site" description="Nucleophile" evidence="1">
    <location>
        <position position="86"/>
    </location>
</feature>
<feature type="active site" evidence="1">
    <location>
        <position position="196"/>
    </location>
</feature>
<feature type="active site" evidence="1">
    <location>
        <position position="198"/>
    </location>
</feature>
<proteinExistence type="inferred from homology"/>
<organism>
    <name type="scientific">Rhizobium meliloti (strain 1021)</name>
    <name type="common">Ensifer meliloti</name>
    <name type="synonym">Sinorhizobium meliloti</name>
    <dbReference type="NCBI Taxonomy" id="266834"/>
    <lineage>
        <taxon>Bacteria</taxon>
        <taxon>Pseudomonadati</taxon>
        <taxon>Pseudomonadota</taxon>
        <taxon>Alphaproteobacteria</taxon>
        <taxon>Hyphomicrobiales</taxon>
        <taxon>Rhizobiaceae</taxon>
        <taxon>Sinorhizobium/Ensifer group</taxon>
        <taxon>Sinorhizobium</taxon>
    </lineage>
</organism>
<reference key="1">
    <citation type="journal article" date="2001" name="Proc. Natl. Acad. Sci. U.S.A.">
        <title>Analysis of the chromosome sequence of the legume symbiont Sinorhizobium meliloti strain 1021.</title>
        <authorList>
            <person name="Capela D."/>
            <person name="Barloy-Hubler F."/>
            <person name="Gouzy J."/>
            <person name="Bothe G."/>
            <person name="Ampe F."/>
            <person name="Batut J."/>
            <person name="Boistard P."/>
            <person name="Becker A."/>
            <person name="Boutry M."/>
            <person name="Cadieu E."/>
            <person name="Dreano S."/>
            <person name="Gloux S."/>
            <person name="Godrie T."/>
            <person name="Goffeau A."/>
            <person name="Kahn D."/>
            <person name="Kiss E."/>
            <person name="Lelaure V."/>
            <person name="Masuy D."/>
            <person name="Pohl T."/>
            <person name="Portetelle D."/>
            <person name="Puehler A."/>
            <person name="Purnelle B."/>
            <person name="Ramsperger U."/>
            <person name="Renard C."/>
            <person name="Thebault P."/>
            <person name="Vandenbol M."/>
            <person name="Weidner S."/>
            <person name="Galibert F."/>
        </authorList>
    </citation>
    <scope>NUCLEOTIDE SEQUENCE [LARGE SCALE GENOMIC DNA]</scope>
    <source>
        <strain>1021</strain>
    </source>
</reference>
<reference key="2">
    <citation type="journal article" date="2001" name="Science">
        <title>The composite genome of the legume symbiont Sinorhizobium meliloti.</title>
        <authorList>
            <person name="Galibert F."/>
            <person name="Finan T.M."/>
            <person name="Long S.R."/>
            <person name="Puehler A."/>
            <person name="Abola P."/>
            <person name="Ampe F."/>
            <person name="Barloy-Hubler F."/>
            <person name="Barnett M.J."/>
            <person name="Becker A."/>
            <person name="Boistard P."/>
            <person name="Bothe G."/>
            <person name="Boutry M."/>
            <person name="Bowser L."/>
            <person name="Buhrmester J."/>
            <person name="Cadieu E."/>
            <person name="Capela D."/>
            <person name="Chain P."/>
            <person name="Cowie A."/>
            <person name="Davis R.W."/>
            <person name="Dreano S."/>
            <person name="Federspiel N.A."/>
            <person name="Fisher R.F."/>
            <person name="Gloux S."/>
            <person name="Godrie T."/>
            <person name="Goffeau A."/>
            <person name="Golding B."/>
            <person name="Gouzy J."/>
            <person name="Gurjal M."/>
            <person name="Hernandez-Lucas I."/>
            <person name="Hong A."/>
            <person name="Huizar L."/>
            <person name="Hyman R.W."/>
            <person name="Jones T."/>
            <person name="Kahn D."/>
            <person name="Kahn M.L."/>
            <person name="Kalman S."/>
            <person name="Keating D.H."/>
            <person name="Kiss E."/>
            <person name="Komp C."/>
            <person name="Lelaure V."/>
            <person name="Masuy D."/>
            <person name="Palm C."/>
            <person name="Peck M.C."/>
            <person name="Pohl T.M."/>
            <person name="Portetelle D."/>
            <person name="Purnelle B."/>
            <person name="Ramsperger U."/>
            <person name="Surzycki R."/>
            <person name="Thebault P."/>
            <person name="Vandenbol M."/>
            <person name="Vorhoelter F.J."/>
            <person name="Weidner S."/>
            <person name="Wells D.H."/>
            <person name="Wong K."/>
            <person name="Yeh K.-C."/>
            <person name="Batut J."/>
        </authorList>
    </citation>
    <scope>NUCLEOTIDE SEQUENCE [LARGE SCALE GENOMIC DNA]</scope>
    <source>
        <strain>1021</strain>
    </source>
</reference>
<accession>Q92PI1</accession>
<evidence type="ECO:0000255" key="1">
    <source>
        <dbReference type="HAMAP-Rule" id="MF_00421"/>
    </source>
</evidence>
<keyword id="KW-0067">ATP-binding</keyword>
<keyword id="KW-0963">Cytoplasm</keyword>
<keyword id="KW-0315">Glutamine amidotransferase</keyword>
<keyword id="KW-0378">Hydrolase</keyword>
<keyword id="KW-0436">Ligase</keyword>
<keyword id="KW-0547">Nucleotide-binding</keyword>
<keyword id="KW-0658">Purine biosynthesis</keyword>
<keyword id="KW-1185">Reference proteome</keyword>
<dbReference type="EC" id="6.3.5.3" evidence="1"/>
<dbReference type="EC" id="3.5.1.2" evidence="1"/>
<dbReference type="EMBL" id="AL591688">
    <property type="protein sequence ID" value="CAC46353.1"/>
    <property type="molecule type" value="Genomic_DNA"/>
</dbReference>
<dbReference type="RefSeq" id="NP_385880.1">
    <property type="nucleotide sequence ID" value="NC_003047.1"/>
</dbReference>
<dbReference type="RefSeq" id="WP_010969457.1">
    <property type="nucleotide sequence ID" value="NC_003047.1"/>
</dbReference>
<dbReference type="SMR" id="Q92PI1"/>
<dbReference type="EnsemblBacteria" id="CAC46353">
    <property type="protein sequence ID" value="CAC46353"/>
    <property type="gene ID" value="SMc00493"/>
</dbReference>
<dbReference type="KEGG" id="sme:SMc00493"/>
<dbReference type="PATRIC" id="fig|266834.11.peg.3213"/>
<dbReference type="eggNOG" id="COG0047">
    <property type="taxonomic scope" value="Bacteria"/>
</dbReference>
<dbReference type="HOGENOM" id="CLU_001031_3_1_5"/>
<dbReference type="OrthoDB" id="9804441at2"/>
<dbReference type="UniPathway" id="UPA00074">
    <property type="reaction ID" value="UER00128"/>
</dbReference>
<dbReference type="Proteomes" id="UP000001976">
    <property type="component" value="Chromosome"/>
</dbReference>
<dbReference type="GO" id="GO:0005737">
    <property type="term" value="C:cytoplasm"/>
    <property type="evidence" value="ECO:0007669"/>
    <property type="project" value="UniProtKB-SubCell"/>
</dbReference>
<dbReference type="GO" id="GO:0005524">
    <property type="term" value="F:ATP binding"/>
    <property type="evidence" value="ECO:0007669"/>
    <property type="project" value="UniProtKB-KW"/>
</dbReference>
<dbReference type="GO" id="GO:0004359">
    <property type="term" value="F:glutaminase activity"/>
    <property type="evidence" value="ECO:0007669"/>
    <property type="project" value="UniProtKB-EC"/>
</dbReference>
<dbReference type="GO" id="GO:0004642">
    <property type="term" value="F:phosphoribosylformylglycinamidine synthase activity"/>
    <property type="evidence" value="ECO:0007669"/>
    <property type="project" value="UniProtKB-UniRule"/>
</dbReference>
<dbReference type="GO" id="GO:0006189">
    <property type="term" value="P:'de novo' IMP biosynthetic process"/>
    <property type="evidence" value="ECO:0007669"/>
    <property type="project" value="UniProtKB-UniRule"/>
</dbReference>
<dbReference type="CDD" id="cd01740">
    <property type="entry name" value="GATase1_FGAR_AT"/>
    <property type="match status" value="1"/>
</dbReference>
<dbReference type="Gene3D" id="3.40.50.880">
    <property type="match status" value="1"/>
</dbReference>
<dbReference type="HAMAP" id="MF_00421">
    <property type="entry name" value="PurQ"/>
    <property type="match status" value="1"/>
</dbReference>
<dbReference type="InterPro" id="IPR029062">
    <property type="entry name" value="Class_I_gatase-like"/>
</dbReference>
<dbReference type="InterPro" id="IPR010075">
    <property type="entry name" value="PRibForGlyAmidine_synth_PurQ"/>
</dbReference>
<dbReference type="NCBIfam" id="TIGR01737">
    <property type="entry name" value="FGAM_synth_I"/>
    <property type="match status" value="1"/>
</dbReference>
<dbReference type="NCBIfam" id="NF002957">
    <property type="entry name" value="PRK03619.1"/>
    <property type="match status" value="1"/>
</dbReference>
<dbReference type="PANTHER" id="PTHR47552">
    <property type="entry name" value="PHOSPHORIBOSYLFORMYLGLYCINAMIDINE SYNTHASE SUBUNIT PURQ"/>
    <property type="match status" value="1"/>
</dbReference>
<dbReference type="PANTHER" id="PTHR47552:SF1">
    <property type="entry name" value="PHOSPHORIBOSYLFORMYLGLYCINAMIDINE SYNTHASE SUBUNIT PURQ"/>
    <property type="match status" value="1"/>
</dbReference>
<dbReference type="Pfam" id="PF13507">
    <property type="entry name" value="GATase_5"/>
    <property type="match status" value="1"/>
</dbReference>
<dbReference type="PIRSF" id="PIRSF001586">
    <property type="entry name" value="FGAM_synth_I"/>
    <property type="match status" value="1"/>
</dbReference>
<dbReference type="SMART" id="SM01211">
    <property type="entry name" value="GATase_5"/>
    <property type="match status" value="1"/>
</dbReference>
<dbReference type="SUPFAM" id="SSF52317">
    <property type="entry name" value="Class I glutamine amidotransferase-like"/>
    <property type="match status" value="1"/>
</dbReference>
<dbReference type="PROSITE" id="PS51273">
    <property type="entry name" value="GATASE_TYPE_1"/>
    <property type="match status" value="1"/>
</dbReference>
<protein>
    <recommendedName>
        <fullName evidence="1">Phosphoribosylformylglycinamidine synthase subunit PurQ</fullName>
        <shortName evidence="1">FGAM synthase</shortName>
        <ecNumber evidence="1">6.3.5.3</ecNumber>
    </recommendedName>
    <alternativeName>
        <fullName evidence="1">Formylglycinamide ribonucleotide amidotransferase subunit I</fullName>
        <shortName evidence="1">FGAR amidotransferase I</shortName>
        <shortName evidence="1">FGAR-AT I</shortName>
    </alternativeName>
    <alternativeName>
        <fullName evidence="1">Glutaminase PurQ</fullName>
        <ecNumber evidence="1">3.5.1.2</ecNumber>
    </alternativeName>
    <alternativeName>
        <fullName evidence="1">Phosphoribosylformylglycinamidine synthase subunit I</fullName>
    </alternativeName>
</protein>
<name>PURQ_RHIME</name>
<sequence>MKSAVVQLPGLNRDCDMIAALTKISGKAPVTVWQTETEIPDVDLIVIPGGFSYGDYLRCGAIAARMPVMQAIKAKAEQGVRVLGVCNGFQILVEAGLLPGALMRNASLKFVCREVKLEVVNADTAFTRAYAKGQVIRSPVAHHDGNYFADAETLKAIEGNGQVVFRYAEGTNPNGSVNDIAGVLNAKGNVLGMMPHPENLIESAHGGADGRGLFASALDVIAA</sequence>
<comment type="function">
    <text evidence="1">Part of the phosphoribosylformylglycinamidine synthase complex involved in the purines biosynthetic pathway. Catalyzes the ATP-dependent conversion of formylglycinamide ribonucleotide (FGAR) and glutamine to yield formylglycinamidine ribonucleotide (FGAM) and glutamate. The FGAM synthase complex is composed of three subunits. PurQ produces an ammonia molecule by converting glutamine to glutamate. PurL transfers the ammonia molecule to FGAR to form FGAM in an ATP-dependent manner. PurS interacts with PurQ and PurL and is thought to assist in the transfer of the ammonia molecule from PurQ to PurL.</text>
</comment>
<comment type="catalytic activity">
    <reaction evidence="1">
        <text>N(2)-formyl-N(1)-(5-phospho-beta-D-ribosyl)glycinamide + L-glutamine + ATP + H2O = 2-formamido-N(1)-(5-O-phospho-beta-D-ribosyl)acetamidine + L-glutamate + ADP + phosphate + H(+)</text>
        <dbReference type="Rhea" id="RHEA:17129"/>
        <dbReference type="ChEBI" id="CHEBI:15377"/>
        <dbReference type="ChEBI" id="CHEBI:15378"/>
        <dbReference type="ChEBI" id="CHEBI:29985"/>
        <dbReference type="ChEBI" id="CHEBI:30616"/>
        <dbReference type="ChEBI" id="CHEBI:43474"/>
        <dbReference type="ChEBI" id="CHEBI:58359"/>
        <dbReference type="ChEBI" id="CHEBI:147286"/>
        <dbReference type="ChEBI" id="CHEBI:147287"/>
        <dbReference type="ChEBI" id="CHEBI:456216"/>
        <dbReference type="EC" id="6.3.5.3"/>
    </reaction>
</comment>
<comment type="catalytic activity">
    <reaction evidence="1">
        <text>L-glutamine + H2O = L-glutamate + NH4(+)</text>
        <dbReference type="Rhea" id="RHEA:15889"/>
        <dbReference type="ChEBI" id="CHEBI:15377"/>
        <dbReference type="ChEBI" id="CHEBI:28938"/>
        <dbReference type="ChEBI" id="CHEBI:29985"/>
        <dbReference type="ChEBI" id="CHEBI:58359"/>
        <dbReference type="EC" id="3.5.1.2"/>
    </reaction>
</comment>
<comment type="pathway">
    <text evidence="1">Purine metabolism; IMP biosynthesis via de novo pathway; 5-amino-1-(5-phospho-D-ribosyl)imidazole from N(2)-formyl-N(1)-(5-phospho-D-ribosyl)glycinamide: step 1/2.</text>
</comment>
<comment type="subunit">
    <text evidence="1">Part of the FGAM synthase complex composed of 1 PurL, 1 PurQ and 2 PurS subunits.</text>
</comment>
<comment type="subcellular location">
    <subcellularLocation>
        <location evidence="1">Cytoplasm</location>
    </subcellularLocation>
</comment>
<gene>
    <name evidence="1" type="primary">purQ</name>
    <name type="ordered locus">R01774</name>
    <name type="ORF">SMc00493</name>
</gene>